<organism>
    <name type="scientific">Bos taurus</name>
    <name type="common">Bovine</name>
    <dbReference type="NCBI Taxonomy" id="9913"/>
    <lineage>
        <taxon>Eukaryota</taxon>
        <taxon>Metazoa</taxon>
        <taxon>Chordata</taxon>
        <taxon>Craniata</taxon>
        <taxon>Vertebrata</taxon>
        <taxon>Euteleostomi</taxon>
        <taxon>Mammalia</taxon>
        <taxon>Eutheria</taxon>
        <taxon>Laurasiatheria</taxon>
        <taxon>Artiodactyla</taxon>
        <taxon>Ruminantia</taxon>
        <taxon>Pecora</taxon>
        <taxon>Bovidae</taxon>
        <taxon>Bovinae</taxon>
        <taxon>Bos</taxon>
    </lineage>
</organism>
<name>LRC51_BOVIN</name>
<feature type="chain" id="PRO_0000225499" description="Leucine-rich repeat-containing protein 51">
    <location>
        <begin position="1"/>
        <end position="192"/>
    </location>
</feature>
<feature type="repeat" description="LRR 1">
    <location>
        <begin position="50"/>
        <end position="71"/>
    </location>
</feature>
<feature type="repeat" description="LRR 2">
    <location>
        <begin position="80"/>
        <end position="101"/>
    </location>
</feature>
<feature type="repeat" description="LRR 3">
    <location>
        <begin position="103"/>
        <end position="124"/>
    </location>
</feature>
<feature type="domain" description="LRRCT">
    <location>
        <begin position="137"/>
        <end position="175"/>
    </location>
</feature>
<keyword id="KW-0963">Cytoplasm</keyword>
<keyword id="KW-0433">Leucine-rich repeat</keyword>
<keyword id="KW-1185">Reference proteome</keyword>
<keyword id="KW-0677">Repeat</keyword>
<comment type="subcellular location">
    <subcellularLocation>
        <location evidence="2">Cytoplasm</location>
    </subcellularLocation>
</comment>
<gene>
    <name evidence="1" type="primary">LRRC51</name>
</gene>
<reference key="1">
    <citation type="journal article" date="2005" name="BMC Genomics">
        <title>Characterization of 954 bovine full-CDS cDNA sequences.</title>
        <authorList>
            <person name="Harhay G.P."/>
            <person name="Sonstegard T.S."/>
            <person name="Keele J.W."/>
            <person name="Heaton M.P."/>
            <person name="Clawson M.L."/>
            <person name="Snelling W.M."/>
            <person name="Wiedmann R.T."/>
            <person name="Van Tassell C.P."/>
            <person name="Smith T.P.L."/>
        </authorList>
    </citation>
    <scope>NUCLEOTIDE SEQUENCE [LARGE SCALE MRNA]</scope>
</reference>
<reference key="2">
    <citation type="submission" date="2005-11" db="EMBL/GenBank/DDBJ databases">
        <authorList>
            <consortium name="NIH - Mammalian Gene Collection (MGC) project"/>
        </authorList>
    </citation>
    <scope>NUCLEOTIDE SEQUENCE [LARGE SCALE MRNA]</scope>
    <source>
        <strain>Crossbred X Angus</strain>
        <tissue>Liver</tissue>
    </source>
</reference>
<dbReference type="EMBL" id="BT020631">
    <property type="protein sequence ID" value="AAX08648.1"/>
    <property type="molecule type" value="mRNA"/>
</dbReference>
<dbReference type="EMBL" id="BC109501">
    <property type="protein sequence ID" value="AAI09502.1"/>
    <property type="molecule type" value="mRNA"/>
</dbReference>
<dbReference type="RefSeq" id="NP_001019716.1">
    <property type="nucleotide sequence ID" value="NM_001024545.1"/>
</dbReference>
<dbReference type="RefSeq" id="NP_001268967.1">
    <property type="nucleotide sequence ID" value="NM_001282038.1"/>
</dbReference>
<dbReference type="RefSeq" id="NP_001268968.1">
    <property type="nucleotide sequence ID" value="NM_001282039.1"/>
</dbReference>
<dbReference type="RefSeq" id="XP_059730675.1">
    <property type="nucleotide sequence ID" value="XM_059874692.1"/>
</dbReference>
<dbReference type="EMDB" id="EMD-50664"/>
<dbReference type="SMR" id="Q5EAD8"/>
<dbReference type="FunCoup" id="Q5EAD8">
    <property type="interactions" value="548"/>
</dbReference>
<dbReference type="STRING" id="9913.ENSBTAP00000023886"/>
<dbReference type="PaxDb" id="9913-ENSBTAP00000023886"/>
<dbReference type="GeneID" id="515066"/>
<dbReference type="KEGG" id="bta:515066"/>
<dbReference type="CTD" id="120356739"/>
<dbReference type="VEuPathDB" id="HostDB:ENSBTAG00000017964"/>
<dbReference type="eggNOG" id="KOG1644">
    <property type="taxonomic scope" value="Eukaryota"/>
</dbReference>
<dbReference type="HOGENOM" id="CLU_095080_1_1_1"/>
<dbReference type="InParanoid" id="Q5EAD8"/>
<dbReference type="OMA" id="LWHQSNS"/>
<dbReference type="OrthoDB" id="676979at2759"/>
<dbReference type="TreeFam" id="TF329158"/>
<dbReference type="Proteomes" id="UP000009136">
    <property type="component" value="Chromosome 15"/>
</dbReference>
<dbReference type="Bgee" id="ENSBTAG00000017964">
    <property type="expression patterns" value="Expressed in semen and 105 other cell types or tissues"/>
</dbReference>
<dbReference type="GO" id="GO:0005930">
    <property type="term" value="C:axoneme"/>
    <property type="evidence" value="ECO:0000318"/>
    <property type="project" value="GO_Central"/>
</dbReference>
<dbReference type="Gene3D" id="3.80.10.10">
    <property type="entry name" value="Ribonuclease Inhibitor"/>
    <property type="match status" value="1"/>
</dbReference>
<dbReference type="InterPro" id="IPR001611">
    <property type="entry name" value="Leu-rich_rpt"/>
</dbReference>
<dbReference type="InterPro" id="IPR032675">
    <property type="entry name" value="LRR_dom_sf"/>
</dbReference>
<dbReference type="PANTHER" id="PTHR46545">
    <property type="entry name" value="LEUCINE-RICH REPEAT-CONTAINING PROTEIN 51"/>
    <property type="match status" value="1"/>
</dbReference>
<dbReference type="PANTHER" id="PTHR46545:SF1">
    <property type="entry name" value="LEUCINE-RICH REPEAT-CONTAINING PROTEIN 51"/>
    <property type="match status" value="1"/>
</dbReference>
<dbReference type="Pfam" id="PF14580">
    <property type="entry name" value="LRR_9"/>
    <property type="match status" value="1"/>
</dbReference>
<dbReference type="SUPFAM" id="SSF52058">
    <property type="entry name" value="L domain-like"/>
    <property type="match status" value="1"/>
</dbReference>
<dbReference type="PROSITE" id="PS51450">
    <property type="entry name" value="LRR"/>
    <property type="match status" value="4"/>
</dbReference>
<accession>Q5EAD8</accession>
<proteinExistence type="evidence at transcript level"/>
<evidence type="ECO:0000250" key="1">
    <source>
        <dbReference type="UniProtKB" id="Q96E66"/>
    </source>
</evidence>
<evidence type="ECO:0000250" key="2">
    <source>
        <dbReference type="UniProtKB" id="Q9DAK8"/>
    </source>
</evidence>
<evidence type="ECO:0000305" key="3"/>
<protein>
    <recommendedName>
        <fullName evidence="3">Leucine-rich repeat-containing protein 51</fullName>
    </recommendedName>
</protein>
<sequence>MNKRNYMNTSVQEPPLDYSFRSIHVTQDLLSEEPRTGLRPVRHAKSGKSMTQSLWLNNNVLTDLRDFNHAVSQLLEHPENLAWIDLSFNDLTSIDPVLTTFFNLSVLYLHGNSIQRLGEVNKLAALPRLRSLTLHGNPIEEEKGYRQYVLCTLPHITTFDFSGVTKADRTTAEVWKRMNIKPKKVRIKHNAL</sequence>